<reference key="1">
    <citation type="submission" date="2007-11" db="EMBL/GenBank/DDBJ databases">
        <title>Complete sequence of chromosome of Shewanella baltica OS195.</title>
        <authorList>
            <consortium name="US DOE Joint Genome Institute"/>
            <person name="Copeland A."/>
            <person name="Lucas S."/>
            <person name="Lapidus A."/>
            <person name="Barry K."/>
            <person name="Glavina del Rio T."/>
            <person name="Dalin E."/>
            <person name="Tice H."/>
            <person name="Pitluck S."/>
            <person name="Chain P."/>
            <person name="Malfatti S."/>
            <person name="Shin M."/>
            <person name="Vergez L."/>
            <person name="Schmutz J."/>
            <person name="Larimer F."/>
            <person name="Land M."/>
            <person name="Hauser L."/>
            <person name="Kyrpides N."/>
            <person name="Kim E."/>
            <person name="Brettar I."/>
            <person name="Rodrigues J."/>
            <person name="Konstantinidis K."/>
            <person name="Klappenbach J."/>
            <person name="Hofle M."/>
            <person name="Tiedje J."/>
            <person name="Richardson P."/>
        </authorList>
    </citation>
    <scope>NUCLEOTIDE SEQUENCE [LARGE SCALE GENOMIC DNA]</scope>
    <source>
        <strain>OS195</strain>
    </source>
</reference>
<feature type="chain" id="PRO_1000086535" description="Large ribosomal subunit protein uL4">
    <location>
        <begin position="1"/>
        <end position="201"/>
    </location>
</feature>
<feature type="region of interest" description="Disordered" evidence="2">
    <location>
        <begin position="45"/>
        <end position="72"/>
    </location>
</feature>
<accession>A9KWA3</accession>
<evidence type="ECO:0000255" key="1">
    <source>
        <dbReference type="HAMAP-Rule" id="MF_01328"/>
    </source>
</evidence>
<evidence type="ECO:0000256" key="2">
    <source>
        <dbReference type="SAM" id="MobiDB-lite"/>
    </source>
</evidence>
<evidence type="ECO:0000305" key="3"/>
<gene>
    <name evidence="1" type="primary">rplD</name>
    <name type="ordered locus">Sbal195_0201</name>
</gene>
<name>RL4_SHEB9</name>
<proteinExistence type="inferred from homology"/>
<keyword id="KW-0687">Ribonucleoprotein</keyword>
<keyword id="KW-0689">Ribosomal protein</keyword>
<keyword id="KW-0694">RNA-binding</keyword>
<keyword id="KW-0699">rRNA-binding</keyword>
<dbReference type="EMBL" id="CP000891">
    <property type="protein sequence ID" value="ABX47383.1"/>
    <property type="molecule type" value="Genomic_DNA"/>
</dbReference>
<dbReference type="RefSeq" id="WP_006083599.1">
    <property type="nucleotide sequence ID" value="NC_009997.1"/>
</dbReference>
<dbReference type="SMR" id="A9KWA3"/>
<dbReference type="GeneID" id="67441761"/>
<dbReference type="KEGG" id="sbn:Sbal195_0201"/>
<dbReference type="HOGENOM" id="CLU_041575_5_2_6"/>
<dbReference type="Proteomes" id="UP000000770">
    <property type="component" value="Chromosome"/>
</dbReference>
<dbReference type="GO" id="GO:1990904">
    <property type="term" value="C:ribonucleoprotein complex"/>
    <property type="evidence" value="ECO:0007669"/>
    <property type="project" value="UniProtKB-KW"/>
</dbReference>
<dbReference type="GO" id="GO:0005840">
    <property type="term" value="C:ribosome"/>
    <property type="evidence" value="ECO:0007669"/>
    <property type="project" value="UniProtKB-KW"/>
</dbReference>
<dbReference type="GO" id="GO:0019843">
    <property type="term" value="F:rRNA binding"/>
    <property type="evidence" value="ECO:0007669"/>
    <property type="project" value="UniProtKB-UniRule"/>
</dbReference>
<dbReference type="GO" id="GO:0003735">
    <property type="term" value="F:structural constituent of ribosome"/>
    <property type="evidence" value="ECO:0007669"/>
    <property type="project" value="InterPro"/>
</dbReference>
<dbReference type="GO" id="GO:0006412">
    <property type="term" value="P:translation"/>
    <property type="evidence" value="ECO:0007669"/>
    <property type="project" value="UniProtKB-UniRule"/>
</dbReference>
<dbReference type="FunFam" id="3.40.1370.10:FF:000001">
    <property type="entry name" value="50S ribosomal protein L4"/>
    <property type="match status" value="1"/>
</dbReference>
<dbReference type="Gene3D" id="3.40.1370.10">
    <property type="match status" value="1"/>
</dbReference>
<dbReference type="HAMAP" id="MF_01328_B">
    <property type="entry name" value="Ribosomal_uL4_B"/>
    <property type="match status" value="1"/>
</dbReference>
<dbReference type="InterPro" id="IPR002136">
    <property type="entry name" value="Ribosomal_uL4"/>
</dbReference>
<dbReference type="InterPro" id="IPR013005">
    <property type="entry name" value="Ribosomal_uL4-like"/>
</dbReference>
<dbReference type="InterPro" id="IPR023574">
    <property type="entry name" value="Ribosomal_uL4_dom_sf"/>
</dbReference>
<dbReference type="NCBIfam" id="TIGR03953">
    <property type="entry name" value="rplD_bact"/>
    <property type="match status" value="1"/>
</dbReference>
<dbReference type="PANTHER" id="PTHR10746">
    <property type="entry name" value="50S RIBOSOMAL PROTEIN L4"/>
    <property type="match status" value="1"/>
</dbReference>
<dbReference type="PANTHER" id="PTHR10746:SF6">
    <property type="entry name" value="LARGE RIBOSOMAL SUBUNIT PROTEIN UL4M"/>
    <property type="match status" value="1"/>
</dbReference>
<dbReference type="Pfam" id="PF00573">
    <property type="entry name" value="Ribosomal_L4"/>
    <property type="match status" value="1"/>
</dbReference>
<dbReference type="SUPFAM" id="SSF52166">
    <property type="entry name" value="Ribosomal protein L4"/>
    <property type="match status" value="1"/>
</dbReference>
<organism>
    <name type="scientific">Shewanella baltica (strain OS195)</name>
    <dbReference type="NCBI Taxonomy" id="399599"/>
    <lineage>
        <taxon>Bacteria</taxon>
        <taxon>Pseudomonadati</taxon>
        <taxon>Pseudomonadota</taxon>
        <taxon>Gammaproteobacteria</taxon>
        <taxon>Alteromonadales</taxon>
        <taxon>Shewanellaceae</taxon>
        <taxon>Shewanella</taxon>
    </lineage>
</organism>
<comment type="function">
    <text evidence="1">One of the primary rRNA binding proteins, this protein initially binds near the 5'-end of the 23S rRNA. It is important during the early stages of 50S assembly. It makes multiple contacts with different domains of the 23S rRNA in the assembled 50S subunit and ribosome.</text>
</comment>
<comment type="function">
    <text evidence="1">Forms part of the polypeptide exit tunnel.</text>
</comment>
<comment type="subunit">
    <text evidence="1">Part of the 50S ribosomal subunit.</text>
</comment>
<comment type="similarity">
    <text evidence="1">Belongs to the universal ribosomal protein uL4 family.</text>
</comment>
<protein>
    <recommendedName>
        <fullName evidence="1">Large ribosomal subunit protein uL4</fullName>
    </recommendedName>
    <alternativeName>
        <fullName evidence="3">50S ribosomal protein L4</fullName>
    </alternativeName>
</protein>
<sequence>MELVLKDAQSALEVSETTFGRDFNEALVHQVVVAYAANARQGTRAQKTRAEVTGSGKKPWRQKGTGRARAGSVKGPIWRGGGVTFAAKTQDHSQKVNKKMYRGALKSILSELVRQERLVVVESFGVEAPKTKELKAKLKAMNLEDVLIVTAEVDENLFLAARNLYKVDVRDVAGLDPVSLIAFNTVLVTADAVKQIEEMLA</sequence>